<protein>
    <recommendedName>
        <fullName evidence="1">Large ribosomal subunit protein bL36</fullName>
    </recommendedName>
    <alternativeName>
        <fullName evidence="2">50S ribosomal protein L36</fullName>
    </alternativeName>
</protein>
<evidence type="ECO:0000255" key="1">
    <source>
        <dbReference type="HAMAP-Rule" id="MF_00251"/>
    </source>
</evidence>
<evidence type="ECO:0000305" key="2"/>
<comment type="similarity">
    <text evidence="1">Belongs to the bacterial ribosomal protein bL36 family.</text>
</comment>
<comment type="sequence caution" evidence="2">
    <conflict type="erroneous initiation">
        <sequence resource="EMBL-CDS" id="ABQ60958"/>
    </conflict>
</comment>
<name>RL36_BRUO2</name>
<dbReference type="EMBL" id="CP000708">
    <property type="protein sequence ID" value="ABQ60958.1"/>
    <property type="status" value="ALT_INIT"/>
    <property type="molecule type" value="Genomic_DNA"/>
</dbReference>
<dbReference type="SMR" id="A5VS98"/>
<dbReference type="KEGG" id="bov:BOV_1686"/>
<dbReference type="HOGENOM" id="CLU_135723_3_3_5"/>
<dbReference type="Proteomes" id="UP000006383">
    <property type="component" value="Chromosome I"/>
</dbReference>
<dbReference type="GO" id="GO:1990904">
    <property type="term" value="C:ribonucleoprotein complex"/>
    <property type="evidence" value="ECO:0007669"/>
    <property type="project" value="UniProtKB-KW"/>
</dbReference>
<dbReference type="GO" id="GO:0005840">
    <property type="term" value="C:ribosome"/>
    <property type="evidence" value="ECO:0007669"/>
    <property type="project" value="UniProtKB-KW"/>
</dbReference>
<dbReference type="GO" id="GO:0003735">
    <property type="term" value="F:structural constituent of ribosome"/>
    <property type="evidence" value="ECO:0007669"/>
    <property type="project" value="InterPro"/>
</dbReference>
<dbReference type="GO" id="GO:0006412">
    <property type="term" value="P:translation"/>
    <property type="evidence" value="ECO:0007669"/>
    <property type="project" value="UniProtKB-UniRule"/>
</dbReference>
<dbReference type="HAMAP" id="MF_00251">
    <property type="entry name" value="Ribosomal_bL36"/>
    <property type="match status" value="1"/>
</dbReference>
<dbReference type="InterPro" id="IPR000473">
    <property type="entry name" value="Ribosomal_bL36"/>
</dbReference>
<dbReference type="InterPro" id="IPR035977">
    <property type="entry name" value="Ribosomal_bL36_sp"/>
</dbReference>
<dbReference type="InterPro" id="IPR047621">
    <property type="entry name" value="Ribosomal_L36_bact"/>
</dbReference>
<dbReference type="NCBIfam" id="NF002021">
    <property type="entry name" value="PRK00831.1"/>
    <property type="match status" value="1"/>
</dbReference>
<dbReference type="NCBIfam" id="TIGR01022">
    <property type="entry name" value="rpmJ_bact"/>
    <property type="match status" value="1"/>
</dbReference>
<dbReference type="PANTHER" id="PTHR47781">
    <property type="entry name" value="50S RIBOSOMAL PROTEIN L36 2"/>
    <property type="match status" value="1"/>
</dbReference>
<dbReference type="PANTHER" id="PTHR47781:SF1">
    <property type="entry name" value="LARGE RIBOSOMAL SUBUNIT PROTEIN BL36B"/>
    <property type="match status" value="1"/>
</dbReference>
<dbReference type="Pfam" id="PF00444">
    <property type="entry name" value="Ribosomal_L36"/>
    <property type="match status" value="1"/>
</dbReference>
<dbReference type="SUPFAM" id="SSF57840">
    <property type="entry name" value="Ribosomal protein L36"/>
    <property type="match status" value="1"/>
</dbReference>
<dbReference type="PROSITE" id="PS00828">
    <property type="entry name" value="RIBOSOMAL_L36"/>
    <property type="match status" value="1"/>
</dbReference>
<keyword id="KW-0687">Ribonucleoprotein</keyword>
<keyword id="KW-0689">Ribosomal protein</keyword>
<feature type="chain" id="PRO_0000344647" description="Large ribosomal subunit protein bL36">
    <location>
        <begin position="1"/>
        <end position="41"/>
    </location>
</feature>
<sequence>MKIKNSLKALKARHRDCQLVRRKGRVYIINKTAPRFKARQG</sequence>
<accession>A5VS98</accession>
<organism>
    <name type="scientific">Brucella ovis (strain ATCC 25840 / 63/290 / NCTC 10512)</name>
    <dbReference type="NCBI Taxonomy" id="444178"/>
    <lineage>
        <taxon>Bacteria</taxon>
        <taxon>Pseudomonadati</taxon>
        <taxon>Pseudomonadota</taxon>
        <taxon>Alphaproteobacteria</taxon>
        <taxon>Hyphomicrobiales</taxon>
        <taxon>Brucellaceae</taxon>
        <taxon>Brucella/Ochrobactrum group</taxon>
        <taxon>Brucella</taxon>
    </lineage>
</organism>
<reference key="1">
    <citation type="journal article" date="2009" name="PLoS ONE">
        <title>Genome degradation in Brucella ovis corresponds with narrowing of its host range and tissue tropism.</title>
        <authorList>
            <person name="Tsolis R.M."/>
            <person name="Seshadri R."/>
            <person name="Santos R.L."/>
            <person name="Sangari F.J."/>
            <person name="Lobo J.M."/>
            <person name="de Jong M.F."/>
            <person name="Ren Q."/>
            <person name="Myers G."/>
            <person name="Brinkac L.M."/>
            <person name="Nelson W.C."/>
            <person name="Deboy R.T."/>
            <person name="Angiuoli S."/>
            <person name="Khouri H."/>
            <person name="Dimitrov G."/>
            <person name="Robinson J.R."/>
            <person name="Mulligan S."/>
            <person name="Walker R.L."/>
            <person name="Elzer P.E."/>
            <person name="Hassan K.A."/>
            <person name="Paulsen I.T."/>
        </authorList>
    </citation>
    <scope>NUCLEOTIDE SEQUENCE [LARGE SCALE GENOMIC DNA]</scope>
    <source>
        <strain>ATCC 25840 / 63/290 / NCTC 10512</strain>
    </source>
</reference>
<proteinExistence type="inferred from homology"/>
<gene>
    <name evidence="1" type="primary">rpmJ</name>
    <name type="ordered locus">BOV_1686</name>
</gene>